<gene>
    <name evidence="9" type="primary">PFKFB1</name>
    <name type="synonym">F6PK</name>
    <name type="synonym">PFRX</name>
</gene>
<accession>P16118</accession>
<accession>B2RA88</accession>
<accession>B4DUN5</accession>
<accession>Q5JXS5</accession>
<accession>Q99951</accession>
<name>F261_HUMAN</name>
<reference key="1">
    <citation type="journal article" date="1990" name="Nucleic Acids Res.">
        <title>Sequence of human liver 6-phosphofructo-2-kinase/fructose-2,6-bisphosphatase.</title>
        <authorList>
            <person name="Lange A.J."/>
            <person name="Pilkis S.J."/>
        </authorList>
    </citation>
    <scope>NUCLEOTIDE SEQUENCE [MRNA] (ISOFORM 1)</scope>
    <source>
        <tissue>Liver</tissue>
    </source>
</reference>
<reference key="2">
    <citation type="journal article" date="2004" name="Nat. Genet.">
        <title>Complete sequencing and characterization of 21,243 full-length human cDNAs.</title>
        <authorList>
            <person name="Ota T."/>
            <person name="Suzuki Y."/>
            <person name="Nishikawa T."/>
            <person name="Otsuki T."/>
            <person name="Sugiyama T."/>
            <person name="Irie R."/>
            <person name="Wakamatsu A."/>
            <person name="Hayashi K."/>
            <person name="Sato H."/>
            <person name="Nagai K."/>
            <person name="Kimura K."/>
            <person name="Makita H."/>
            <person name="Sekine M."/>
            <person name="Obayashi M."/>
            <person name="Nishi T."/>
            <person name="Shibahara T."/>
            <person name="Tanaka T."/>
            <person name="Ishii S."/>
            <person name="Yamamoto J."/>
            <person name="Saito K."/>
            <person name="Kawai Y."/>
            <person name="Isono Y."/>
            <person name="Nakamura Y."/>
            <person name="Nagahari K."/>
            <person name="Murakami K."/>
            <person name="Yasuda T."/>
            <person name="Iwayanagi T."/>
            <person name="Wagatsuma M."/>
            <person name="Shiratori A."/>
            <person name="Sudo H."/>
            <person name="Hosoiri T."/>
            <person name="Kaku Y."/>
            <person name="Kodaira H."/>
            <person name="Kondo H."/>
            <person name="Sugawara M."/>
            <person name="Takahashi M."/>
            <person name="Kanda K."/>
            <person name="Yokoi T."/>
            <person name="Furuya T."/>
            <person name="Kikkawa E."/>
            <person name="Omura Y."/>
            <person name="Abe K."/>
            <person name="Kamihara K."/>
            <person name="Katsuta N."/>
            <person name="Sato K."/>
            <person name="Tanikawa M."/>
            <person name="Yamazaki M."/>
            <person name="Ninomiya K."/>
            <person name="Ishibashi T."/>
            <person name="Yamashita H."/>
            <person name="Murakawa K."/>
            <person name="Fujimori K."/>
            <person name="Tanai H."/>
            <person name="Kimata M."/>
            <person name="Watanabe M."/>
            <person name="Hiraoka S."/>
            <person name="Chiba Y."/>
            <person name="Ishida S."/>
            <person name="Ono Y."/>
            <person name="Takiguchi S."/>
            <person name="Watanabe S."/>
            <person name="Yosida M."/>
            <person name="Hotuta T."/>
            <person name="Kusano J."/>
            <person name="Kanehori K."/>
            <person name="Takahashi-Fujii A."/>
            <person name="Hara H."/>
            <person name="Tanase T.-O."/>
            <person name="Nomura Y."/>
            <person name="Togiya S."/>
            <person name="Komai F."/>
            <person name="Hara R."/>
            <person name="Takeuchi K."/>
            <person name="Arita M."/>
            <person name="Imose N."/>
            <person name="Musashino K."/>
            <person name="Yuuki H."/>
            <person name="Oshima A."/>
            <person name="Sasaki N."/>
            <person name="Aotsuka S."/>
            <person name="Yoshikawa Y."/>
            <person name="Matsunawa H."/>
            <person name="Ichihara T."/>
            <person name="Shiohata N."/>
            <person name="Sano S."/>
            <person name="Moriya S."/>
            <person name="Momiyama H."/>
            <person name="Satoh N."/>
            <person name="Takami S."/>
            <person name="Terashima Y."/>
            <person name="Suzuki O."/>
            <person name="Nakagawa S."/>
            <person name="Senoh A."/>
            <person name="Mizoguchi H."/>
            <person name="Goto Y."/>
            <person name="Shimizu F."/>
            <person name="Wakebe H."/>
            <person name="Hishigaki H."/>
            <person name="Watanabe T."/>
            <person name="Sugiyama A."/>
            <person name="Takemoto M."/>
            <person name="Kawakami B."/>
            <person name="Yamazaki M."/>
            <person name="Watanabe K."/>
            <person name="Kumagai A."/>
            <person name="Itakura S."/>
            <person name="Fukuzumi Y."/>
            <person name="Fujimori Y."/>
            <person name="Komiyama M."/>
            <person name="Tashiro H."/>
            <person name="Tanigami A."/>
            <person name="Fujiwara T."/>
            <person name="Ono T."/>
            <person name="Yamada K."/>
            <person name="Fujii Y."/>
            <person name="Ozaki K."/>
            <person name="Hirao M."/>
            <person name="Ohmori Y."/>
            <person name="Kawabata A."/>
            <person name="Hikiji T."/>
            <person name="Kobatake N."/>
            <person name="Inagaki H."/>
            <person name="Ikema Y."/>
            <person name="Okamoto S."/>
            <person name="Okitani R."/>
            <person name="Kawakami T."/>
            <person name="Noguchi S."/>
            <person name="Itoh T."/>
            <person name="Shigeta K."/>
            <person name="Senba T."/>
            <person name="Matsumura K."/>
            <person name="Nakajima Y."/>
            <person name="Mizuno T."/>
            <person name="Morinaga M."/>
            <person name="Sasaki M."/>
            <person name="Togashi T."/>
            <person name="Oyama M."/>
            <person name="Hata H."/>
            <person name="Watanabe M."/>
            <person name="Komatsu T."/>
            <person name="Mizushima-Sugano J."/>
            <person name="Satoh T."/>
            <person name="Shirai Y."/>
            <person name="Takahashi Y."/>
            <person name="Nakagawa K."/>
            <person name="Okumura K."/>
            <person name="Nagase T."/>
            <person name="Nomura N."/>
            <person name="Kikuchi H."/>
            <person name="Masuho Y."/>
            <person name="Yamashita R."/>
            <person name="Nakai K."/>
            <person name="Yada T."/>
            <person name="Nakamura Y."/>
            <person name="Ohara O."/>
            <person name="Isogai T."/>
            <person name="Sugano S."/>
        </authorList>
    </citation>
    <scope>NUCLEOTIDE SEQUENCE [LARGE SCALE MRNA] (ISOFORMS 1 AND 2)</scope>
    <source>
        <tissue>Liver</tissue>
    </source>
</reference>
<reference key="3">
    <citation type="journal article" date="2005" name="Nature">
        <title>The DNA sequence of the human X chromosome.</title>
        <authorList>
            <person name="Ross M.T."/>
            <person name="Grafham D.V."/>
            <person name="Coffey A.J."/>
            <person name="Scherer S."/>
            <person name="McLay K."/>
            <person name="Muzny D."/>
            <person name="Platzer M."/>
            <person name="Howell G.R."/>
            <person name="Burrows C."/>
            <person name="Bird C.P."/>
            <person name="Frankish A."/>
            <person name="Lovell F.L."/>
            <person name="Howe K.L."/>
            <person name="Ashurst J.L."/>
            <person name="Fulton R.S."/>
            <person name="Sudbrak R."/>
            <person name="Wen G."/>
            <person name="Jones M.C."/>
            <person name="Hurles M.E."/>
            <person name="Andrews T.D."/>
            <person name="Scott C.E."/>
            <person name="Searle S."/>
            <person name="Ramser J."/>
            <person name="Whittaker A."/>
            <person name="Deadman R."/>
            <person name="Carter N.P."/>
            <person name="Hunt S.E."/>
            <person name="Chen R."/>
            <person name="Cree A."/>
            <person name="Gunaratne P."/>
            <person name="Havlak P."/>
            <person name="Hodgson A."/>
            <person name="Metzker M.L."/>
            <person name="Richards S."/>
            <person name="Scott G."/>
            <person name="Steffen D."/>
            <person name="Sodergren E."/>
            <person name="Wheeler D.A."/>
            <person name="Worley K.C."/>
            <person name="Ainscough R."/>
            <person name="Ambrose K.D."/>
            <person name="Ansari-Lari M.A."/>
            <person name="Aradhya S."/>
            <person name="Ashwell R.I."/>
            <person name="Babbage A.K."/>
            <person name="Bagguley C.L."/>
            <person name="Ballabio A."/>
            <person name="Banerjee R."/>
            <person name="Barker G.E."/>
            <person name="Barlow K.F."/>
            <person name="Barrett I.P."/>
            <person name="Bates K.N."/>
            <person name="Beare D.M."/>
            <person name="Beasley H."/>
            <person name="Beasley O."/>
            <person name="Beck A."/>
            <person name="Bethel G."/>
            <person name="Blechschmidt K."/>
            <person name="Brady N."/>
            <person name="Bray-Allen S."/>
            <person name="Bridgeman A.M."/>
            <person name="Brown A.J."/>
            <person name="Brown M.J."/>
            <person name="Bonnin D."/>
            <person name="Bruford E.A."/>
            <person name="Buhay C."/>
            <person name="Burch P."/>
            <person name="Burford D."/>
            <person name="Burgess J."/>
            <person name="Burrill W."/>
            <person name="Burton J."/>
            <person name="Bye J.M."/>
            <person name="Carder C."/>
            <person name="Carrel L."/>
            <person name="Chako J."/>
            <person name="Chapman J.C."/>
            <person name="Chavez D."/>
            <person name="Chen E."/>
            <person name="Chen G."/>
            <person name="Chen Y."/>
            <person name="Chen Z."/>
            <person name="Chinault C."/>
            <person name="Ciccodicola A."/>
            <person name="Clark S.Y."/>
            <person name="Clarke G."/>
            <person name="Clee C.M."/>
            <person name="Clegg S."/>
            <person name="Clerc-Blankenburg K."/>
            <person name="Clifford K."/>
            <person name="Cobley V."/>
            <person name="Cole C.G."/>
            <person name="Conquer J.S."/>
            <person name="Corby N."/>
            <person name="Connor R.E."/>
            <person name="David R."/>
            <person name="Davies J."/>
            <person name="Davis C."/>
            <person name="Davis J."/>
            <person name="Delgado O."/>
            <person name="Deshazo D."/>
            <person name="Dhami P."/>
            <person name="Ding Y."/>
            <person name="Dinh H."/>
            <person name="Dodsworth S."/>
            <person name="Draper H."/>
            <person name="Dugan-Rocha S."/>
            <person name="Dunham A."/>
            <person name="Dunn M."/>
            <person name="Durbin K.J."/>
            <person name="Dutta I."/>
            <person name="Eades T."/>
            <person name="Ellwood M."/>
            <person name="Emery-Cohen A."/>
            <person name="Errington H."/>
            <person name="Evans K.L."/>
            <person name="Faulkner L."/>
            <person name="Francis F."/>
            <person name="Frankland J."/>
            <person name="Fraser A.E."/>
            <person name="Galgoczy P."/>
            <person name="Gilbert J."/>
            <person name="Gill R."/>
            <person name="Gloeckner G."/>
            <person name="Gregory S.G."/>
            <person name="Gribble S."/>
            <person name="Griffiths C."/>
            <person name="Grocock R."/>
            <person name="Gu Y."/>
            <person name="Gwilliam R."/>
            <person name="Hamilton C."/>
            <person name="Hart E.A."/>
            <person name="Hawes A."/>
            <person name="Heath P.D."/>
            <person name="Heitmann K."/>
            <person name="Hennig S."/>
            <person name="Hernandez J."/>
            <person name="Hinzmann B."/>
            <person name="Ho S."/>
            <person name="Hoffs M."/>
            <person name="Howden P.J."/>
            <person name="Huckle E.J."/>
            <person name="Hume J."/>
            <person name="Hunt P.J."/>
            <person name="Hunt A.R."/>
            <person name="Isherwood J."/>
            <person name="Jacob L."/>
            <person name="Johnson D."/>
            <person name="Jones S."/>
            <person name="de Jong P.J."/>
            <person name="Joseph S.S."/>
            <person name="Keenan S."/>
            <person name="Kelly S."/>
            <person name="Kershaw J.K."/>
            <person name="Khan Z."/>
            <person name="Kioschis P."/>
            <person name="Klages S."/>
            <person name="Knights A.J."/>
            <person name="Kosiura A."/>
            <person name="Kovar-Smith C."/>
            <person name="Laird G.K."/>
            <person name="Langford C."/>
            <person name="Lawlor S."/>
            <person name="Leversha M."/>
            <person name="Lewis L."/>
            <person name="Liu W."/>
            <person name="Lloyd C."/>
            <person name="Lloyd D.M."/>
            <person name="Loulseged H."/>
            <person name="Loveland J.E."/>
            <person name="Lovell J.D."/>
            <person name="Lozado R."/>
            <person name="Lu J."/>
            <person name="Lyne R."/>
            <person name="Ma J."/>
            <person name="Maheshwari M."/>
            <person name="Matthews L.H."/>
            <person name="McDowall J."/>
            <person name="McLaren S."/>
            <person name="McMurray A."/>
            <person name="Meidl P."/>
            <person name="Meitinger T."/>
            <person name="Milne S."/>
            <person name="Miner G."/>
            <person name="Mistry S.L."/>
            <person name="Morgan M."/>
            <person name="Morris S."/>
            <person name="Mueller I."/>
            <person name="Mullikin J.C."/>
            <person name="Nguyen N."/>
            <person name="Nordsiek G."/>
            <person name="Nyakatura G."/>
            <person name="O'dell C.N."/>
            <person name="Okwuonu G."/>
            <person name="Palmer S."/>
            <person name="Pandian R."/>
            <person name="Parker D."/>
            <person name="Parrish J."/>
            <person name="Pasternak S."/>
            <person name="Patel D."/>
            <person name="Pearce A.V."/>
            <person name="Pearson D.M."/>
            <person name="Pelan S.E."/>
            <person name="Perez L."/>
            <person name="Porter K.M."/>
            <person name="Ramsey Y."/>
            <person name="Reichwald K."/>
            <person name="Rhodes S."/>
            <person name="Ridler K.A."/>
            <person name="Schlessinger D."/>
            <person name="Schueler M.G."/>
            <person name="Sehra H.K."/>
            <person name="Shaw-Smith C."/>
            <person name="Shen H."/>
            <person name="Sheridan E.M."/>
            <person name="Shownkeen R."/>
            <person name="Skuce C.D."/>
            <person name="Smith M.L."/>
            <person name="Sotheran E.C."/>
            <person name="Steingruber H.E."/>
            <person name="Steward C.A."/>
            <person name="Storey R."/>
            <person name="Swann R.M."/>
            <person name="Swarbreck D."/>
            <person name="Tabor P.E."/>
            <person name="Taudien S."/>
            <person name="Taylor T."/>
            <person name="Teague B."/>
            <person name="Thomas K."/>
            <person name="Thorpe A."/>
            <person name="Timms K."/>
            <person name="Tracey A."/>
            <person name="Trevanion S."/>
            <person name="Tromans A.C."/>
            <person name="d'Urso M."/>
            <person name="Verduzco D."/>
            <person name="Villasana D."/>
            <person name="Waldron L."/>
            <person name="Wall M."/>
            <person name="Wang Q."/>
            <person name="Warren J."/>
            <person name="Warry G.L."/>
            <person name="Wei X."/>
            <person name="West A."/>
            <person name="Whitehead S.L."/>
            <person name="Whiteley M.N."/>
            <person name="Wilkinson J.E."/>
            <person name="Willey D.L."/>
            <person name="Williams G."/>
            <person name="Williams L."/>
            <person name="Williamson A."/>
            <person name="Williamson H."/>
            <person name="Wilming L."/>
            <person name="Woodmansey R.L."/>
            <person name="Wray P.W."/>
            <person name="Yen J."/>
            <person name="Zhang J."/>
            <person name="Zhou J."/>
            <person name="Zoghbi H."/>
            <person name="Zorilla S."/>
            <person name="Buck D."/>
            <person name="Reinhardt R."/>
            <person name="Poustka A."/>
            <person name="Rosenthal A."/>
            <person name="Lehrach H."/>
            <person name="Meindl A."/>
            <person name="Minx P.J."/>
            <person name="Hillier L.W."/>
            <person name="Willard H.F."/>
            <person name="Wilson R.K."/>
            <person name="Waterston R.H."/>
            <person name="Rice C.M."/>
            <person name="Vaudin M."/>
            <person name="Coulson A."/>
            <person name="Nelson D.L."/>
            <person name="Weinstock G."/>
            <person name="Sulston J.E."/>
            <person name="Durbin R.M."/>
            <person name="Hubbard T."/>
            <person name="Gibbs R.A."/>
            <person name="Beck S."/>
            <person name="Rogers J."/>
            <person name="Bentley D.R."/>
        </authorList>
    </citation>
    <scope>NUCLEOTIDE SEQUENCE [LARGE SCALE GENOMIC DNA]</scope>
</reference>
<reference key="4">
    <citation type="journal article" date="2004" name="Genome Res.">
        <title>The status, quality, and expansion of the NIH full-length cDNA project: the Mammalian Gene Collection (MGC).</title>
        <authorList>
            <consortium name="The MGC Project Team"/>
        </authorList>
    </citation>
    <scope>NUCLEOTIDE SEQUENCE [LARGE SCALE MRNA] (ISOFORM 1)</scope>
</reference>
<reference key="5">
    <citation type="journal article" date="1988" name="Biochem. Biophys. Res. Commun.">
        <title>Molecular cloning, sequence analysis, and expression of a human liver cDNA coding for fructose-6-P,2-kinase:fructose-2,6-bisphosphatase.</title>
        <authorList>
            <person name="Algaier J."/>
            <person name="Uyeda K."/>
        </authorList>
    </citation>
    <scope>NUCLEOTIDE SEQUENCE [MRNA] OF 94-471</scope>
    <scope>FUNCTION</scope>
    <scope>CATALYTIC ACTIVITY</scope>
    <source>
        <tissue>Liver</tissue>
    </source>
</reference>
<reference key="6">
    <citation type="journal article" date="2014" name="J. Proteomics">
        <title>An enzyme assisted RP-RPLC approach for in-depth analysis of human liver phosphoproteome.</title>
        <authorList>
            <person name="Bian Y."/>
            <person name="Song C."/>
            <person name="Cheng K."/>
            <person name="Dong M."/>
            <person name="Wang F."/>
            <person name="Huang J."/>
            <person name="Sun D."/>
            <person name="Wang L."/>
            <person name="Ye M."/>
            <person name="Zou H."/>
        </authorList>
    </citation>
    <scope>IDENTIFICATION BY MASS SPECTROMETRY [LARGE SCALE ANALYSIS]</scope>
    <source>
        <tissue>Liver</tissue>
    </source>
</reference>
<reference key="7">
    <citation type="journal article" date="2003" name="J. Biol. Chem.">
        <title>Tissue-specific structure/function differentiation of the liver isoform of 6-phosphofructo-2-kinase/fructose-2,6-bisphosphatase.</title>
        <authorList>
            <person name="Lee Y.H."/>
            <person name="Li Y."/>
            <person name="Uyeda K."/>
            <person name="Hasemann C.A."/>
        </authorList>
    </citation>
    <scope>X-RAY CRYSTALLOGRAPHY (2.4 ANGSTROMS) OF 40-471 IN COMPLEX WITH ATP ANALOG</scope>
    <scope>SUBUNIT</scope>
</reference>
<feature type="initiator methionine" description="Removed" evidence="2">
    <location>
        <position position="1"/>
    </location>
</feature>
<feature type="chain" id="PRO_0000179960" description="6-phosphofructo-2-kinase/fructose-2,6-bisphosphatase 1">
    <location>
        <begin position="2"/>
        <end position="471"/>
    </location>
</feature>
<feature type="region of interest" description="6-phosphofructo-2-kinase">
    <location>
        <begin position="2"/>
        <end position="250"/>
    </location>
</feature>
<feature type="region of interest" description="Fructose-2,6-bisphosphatase">
    <location>
        <begin position="251"/>
        <end position="471"/>
    </location>
</feature>
<feature type="active site" evidence="4">
    <location>
        <position position="131"/>
    </location>
</feature>
<feature type="active site" evidence="4">
    <location>
        <position position="161"/>
    </location>
</feature>
<feature type="active site" description="Tele-phosphohistidine intermediate" evidence="2">
    <location>
        <position position="259"/>
    </location>
</feature>
<feature type="active site" description="Proton donor/acceptor" evidence="2">
    <location>
        <position position="328"/>
    </location>
</feature>
<feature type="binding site" evidence="5">
    <location>
        <begin position="49"/>
        <end position="57"/>
    </location>
    <ligand>
        <name>ATP</name>
        <dbReference type="ChEBI" id="CHEBI:30616"/>
    </ligand>
</feature>
<feature type="binding site" evidence="3">
    <location>
        <position position="82"/>
    </location>
    <ligand>
        <name>beta-D-fructose 6-phosphate</name>
        <dbReference type="ChEBI" id="CHEBI:57634"/>
    </ligand>
</feature>
<feature type="binding site" evidence="3">
    <location>
        <position position="105"/>
    </location>
    <ligand>
        <name>beta-D-fructose 6-phosphate</name>
        <dbReference type="ChEBI" id="CHEBI:57634"/>
    </ligand>
</feature>
<feature type="binding site" evidence="3">
    <location>
        <position position="133"/>
    </location>
    <ligand>
        <name>beta-D-fructose 6-phosphate</name>
        <dbReference type="ChEBI" id="CHEBI:57634"/>
    </ligand>
</feature>
<feature type="binding site" evidence="3">
    <location>
        <position position="139"/>
    </location>
    <ligand>
        <name>beta-D-fructose 6-phosphate</name>
        <dbReference type="ChEBI" id="CHEBI:57634"/>
    </ligand>
</feature>
<feature type="binding site" evidence="5">
    <location>
        <begin position="170"/>
        <end position="175"/>
    </location>
    <ligand>
        <name>ATP</name>
        <dbReference type="ChEBI" id="CHEBI:30616"/>
    </ligand>
</feature>
<feature type="binding site" evidence="3">
    <location>
        <position position="175"/>
    </location>
    <ligand>
        <name>beta-D-fructose 6-phosphate</name>
        <dbReference type="ChEBI" id="CHEBI:57634"/>
    </ligand>
</feature>
<feature type="binding site" evidence="3">
    <location>
        <position position="196"/>
    </location>
    <ligand>
        <name>beta-D-fructose 6-phosphate</name>
        <dbReference type="ChEBI" id="CHEBI:57634"/>
    </ligand>
</feature>
<feature type="binding site" evidence="3">
    <location>
        <position position="200"/>
    </location>
    <ligand>
        <name>beta-D-fructose 6-phosphate</name>
        <dbReference type="ChEBI" id="CHEBI:57634"/>
    </ligand>
</feature>
<feature type="binding site" evidence="3">
    <location>
        <position position="258"/>
    </location>
    <ligand>
        <name>beta-D-fructose 2,6-bisphosphate</name>
        <dbReference type="ChEBI" id="CHEBI:58579"/>
    </ligand>
</feature>
<feature type="binding site" evidence="3">
    <location>
        <position position="265"/>
    </location>
    <ligand>
        <name>beta-D-fructose 2,6-bisphosphate</name>
        <dbReference type="ChEBI" id="CHEBI:58579"/>
    </ligand>
</feature>
<feature type="binding site" evidence="2">
    <location>
        <position position="271"/>
    </location>
    <ligand>
        <name>beta-D-fructose 2,6-bisphosphate</name>
        <dbReference type="ChEBI" id="CHEBI:58579"/>
    </ligand>
</feature>
<feature type="binding site" evidence="3">
    <location>
        <position position="308"/>
    </location>
    <ligand>
        <name>beta-D-fructose 2,6-bisphosphate</name>
        <dbReference type="ChEBI" id="CHEBI:58579"/>
    </ligand>
</feature>
<feature type="binding site" evidence="2">
    <location>
        <position position="339"/>
    </location>
    <ligand>
        <name>beta-D-fructose 2,6-bisphosphate</name>
        <dbReference type="ChEBI" id="CHEBI:58579"/>
    </ligand>
</feature>
<feature type="binding site" evidence="2">
    <location>
        <begin position="350"/>
        <end position="353"/>
    </location>
    <ligand>
        <name>ATP</name>
        <dbReference type="ChEBI" id="CHEBI:30616"/>
    </ligand>
</feature>
<feature type="binding site" evidence="2">
    <location>
        <position position="353"/>
    </location>
    <ligand>
        <name>beta-D-fructose 2,6-bisphosphate</name>
        <dbReference type="ChEBI" id="CHEBI:58579"/>
    </ligand>
</feature>
<feature type="binding site" evidence="2">
    <location>
        <position position="357"/>
    </location>
    <ligand>
        <name>beta-D-fructose 2,6-bisphosphate</name>
        <dbReference type="ChEBI" id="CHEBI:58579"/>
    </ligand>
</feature>
<feature type="binding site" evidence="2">
    <location>
        <position position="368"/>
    </location>
    <ligand>
        <name>beta-D-fructose 2,6-bisphosphate</name>
        <dbReference type="ChEBI" id="CHEBI:58579"/>
    </ligand>
</feature>
<feature type="binding site" evidence="2">
    <location>
        <begin position="394"/>
        <end position="398"/>
    </location>
    <ligand>
        <name>ATP</name>
        <dbReference type="ChEBI" id="CHEBI:30616"/>
    </ligand>
</feature>
<feature type="binding site" evidence="2">
    <location>
        <position position="394"/>
    </location>
    <ligand>
        <name>beta-D-fructose 2,6-bisphosphate</name>
        <dbReference type="ChEBI" id="CHEBI:58579"/>
    </ligand>
</feature>
<feature type="binding site" evidence="2">
    <location>
        <position position="398"/>
    </location>
    <ligand>
        <name>beta-D-fructose 2,6-bisphosphate</name>
        <dbReference type="ChEBI" id="CHEBI:58579"/>
    </ligand>
</feature>
<feature type="binding site" evidence="5">
    <location>
        <position position="430"/>
    </location>
    <ligand>
        <name>ATP</name>
        <dbReference type="ChEBI" id="CHEBI:30616"/>
    </ligand>
</feature>
<feature type="site" description="Transition state stabilizer" evidence="1">
    <location>
        <position position="393"/>
    </location>
</feature>
<feature type="modified residue" description="N-acetylserine" evidence="2">
    <location>
        <position position="2"/>
    </location>
</feature>
<feature type="modified residue" description="Phosphoserine; by PKA" evidence="2">
    <location>
        <position position="33"/>
    </location>
</feature>
<feature type="modified residue" description="Phosphoserine" evidence="2">
    <location>
        <position position="141"/>
    </location>
</feature>
<feature type="splice variant" id="VSP_054795" description="In isoform 2." evidence="7">
    <original>MSPEMGELTQTRLQKIWIPHSSGSSRLQRRRGSSIPQFTNSPTMVIMVGLPARGKTYISTKLTRYLNWIGTPT</original>
    <variation>MEEKTSRI</variation>
    <location>
        <begin position="1"/>
        <end position="73"/>
    </location>
</feature>
<feature type="sequence conflict" description="In Ref. 1; CAA36861." evidence="8" ref="1">
    <original>H</original>
    <variation>R</variation>
    <location>
        <position position="305"/>
    </location>
</feature>
<feature type="sequence conflict" description="In Ref. 5; AAA35818." evidence="8" ref="5">
    <original>R</original>
    <variation>H</variation>
    <location>
        <position position="359"/>
    </location>
</feature>
<feature type="sequence conflict" description="In Ref. 5; AAA35818." evidence="8" ref="5">
    <original>MR</original>
    <variation>HA</variation>
    <location>
        <begin position="397"/>
        <end position="398"/>
    </location>
</feature>
<feature type="strand" evidence="10">
    <location>
        <begin position="43"/>
        <end position="48"/>
    </location>
</feature>
<feature type="helix" evidence="10">
    <location>
        <begin position="55"/>
        <end position="68"/>
    </location>
</feature>
<feature type="strand" evidence="10">
    <location>
        <begin position="73"/>
        <end position="77"/>
    </location>
</feature>
<feature type="helix" evidence="10">
    <location>
        <begin position="78"/>
        <end position="83"/>
    </location>
</feature>
<feature type="helix" evidence="10">
    <location>
        <begin position="91"/>
        <end position="94"/>
    </location>
</feature>
<feature type="helix" evidence="10">
    <location>
        <begin position="99"/>
        <end position="121"/>
    </location>
</feature>
<feature type="strand" evidence="10">
    <location>
        <begin position="126"/>
        <end position="132"/>
    </location>
</feature>
<feature type="helix" evidence="10">
    <location>
        <begin position="137"/>
        <end position="150"/>
    </location>
</feature>
<feature type="strand" evidence="10">
    <location>
        <begin position="153"/>
        <end position="160"/>
    </location>
</feature>
<feature type="helix" evidence="10">
    <location>
        <begin position="164"/>
        <end position="175"/>
    </location>
</feature>
<feature type="helix" evidence="10">
    <location>
        <begin position="187"/>
        <end position="201"/>
    </location>
</feature>
<feature type="turn" evidence="10">
    <location>
        <begin position="209"/>
        <end position="214"/>
    </location>
</feature>
<feature type="strand" evidence="10">
    <location>
        <begin position="217"/>
        <end position="221"/>
    </location>
</feature>
<feature type="turn" evidence="10">
    <location>
        <begin position="222"/>
        <end position="225"/>
    </location>
</feature>
<feature type="strand" evidence="10">
    <location>
        <begin position="226"/>
        <end position="230"/>
    </location>
</feature>
<feature type="helix" evidence="10">
    <location>
        <begin position="235"/>
        <end position="244"/>
    </location>
</feature>
<feature type="strand" evidence="10">
    <location>
        <begin position="254"/>
        <end position="258"/>
    </location>
</feature>
<feature type="helix" evidence="10">
    <location>
        <begin position="263"/>
        <end position="266"/>
    </location>
</feature>
<feature type="helix" evidence="10">
    <location>
        <begin position="278"/>
        <end position="293"/>
    </location>
</feature>
<feature type="strand" evidence="10">
    <location>
        <begin position="300"/>
        <end position="303"/>
    </location>
</feature>
<feature type="helix" evidence="10">
    <location>
        <begin position="307"/>
        <end position="314"/>
    </location>
</feature>
<feature type="helix" evidence="10">
    <location>
        <begin position="324"/>
        <end position="326"/>
    </location>
</feature>
<feature type="helix" evidence="10">
    <location>
        <begin position="332"/>
        <end position="334"/>
    </location>
</feature>
<feature type="helix" evidence="10">
    <location>
        <begin position="339"/>
        <end position="345"/>
    </location>
</feature>
<feature type="helix" evidence="10">
    <location>
        <begin position="347"/>
        <end position="355"/>
    </location>
</feature>
<feature type="turn" evidence="10">
    <location>
        <begin position="357"/>
        <end position="359"/>
    </location>
</feature>
<feature type="helix" evidence="10">
    <location>
        <begin position="368"/>
        <end position="384"/>
    </location>
</feature>
<feature type="strand" evidence="10">
    <location>
        <begin position="386"/>
        <end position="392"/>
    </location>
</feature>
<feature type="helix" evidence="10">
    <location>
        <begin position="394"/>
        <end position="405"/>
    </location>
</feature>
<feature type="turn" evidence="10">
    <location>
        <begin position="409"/>
        <end position="411"/>
    </location>
</feature>
<feature type="helix" evidence="10">
    <location>
        <begin position="412"/>
        <end position="414"/>
    </location>
</feature>
<feature type="strand" evidence="10">
    <location>
        <begin position="421"/>
        <end position="427"/>
    </location>
</feature>
<feature type="strand" evidence="10">
    <location>
        <begin position="429"/>
        <end position="438"/>
    </location>
</feature>
<feature type="helix" evidence="10">
    <location>
        <begin position="460"/>
        <end position="464"/>
    </location>
</feature>
<dbReference type="EC" id="2.7.1.105" evidence="2"/>
<dbReference type="EC" id="3.1.3.46" evidence="6"/>
<dbReference type="EMBL" id="X52638">
    <property type="protein sequence ID" value="CAA36861.1"/>
    <property type="molecule type" value="mRNA"/>
</dbReference>
<dbReference type="EMBL" id="AK314089">
    <property type="protein sequence ID" value="BAG36785.1"/>
    <property type="molecule type" value="mRNA"/>
</dbReference>
<dbReference type="EMBL" id="AK300724">
    <property type="protein sequence ID" value="BAG62397.1"/>
    <property type="molecule type" value="mRNA"/>
</dbReference>
<dbReference type="EMBL" id="AL049732">
    <property type="status" value="NOT_ANNOTATED_CDS"/>
    <property type="molecule type" value="Genomic_DNA"/>
</dbReference>
<dbReference type="EMBL" id="AL020991">
    <property type="status" value="NOT_ANNOTATED_CDS"/>
    <property type="molecule type" value="Genomic_DNA"/>
</dbReference>
<dbReference type="EMBL" id="BC096079">
    <property type="protein sequence ID" value="AAH96079.1"/>
    <property type="molecule type" value="mRNA"/>
</dbReference>
<dbReference type="EMBL" id="M19938">
    <property type="protein sequence ID" value="AAA35818.1"/>
    <property type="molecule type" value="mRNA"/>
</dbReference>
<dbReference type="CCDS" id="CCDS14364.1">
    <molecule id="P16118-1"/>
</dbReference>
<dbReference type="CCDS" id="CCDS65273.1">
    <molecule id="P16118-2"/>
</dbReference>
<dbReference type="PIR" id="S12732">
    <property type="entry name" value="S12732"/>
</dbReference>
<dbReference type="RefSeq" id="NP_001258733.1">
    <property type="nucleotide sequence ID" value="NM_001271804.1"/>
</dbReference>
<dbReference type="RefSeq" id="NP_001258734.1">
    <molecule id="P16118-2"/>
    <property type="nucleotide sequence ID" value="NM_001271805.2"/>
</dbReference>
<dbReference type="RefSeq" id="NP_002616.2">
    <molecule id="P16118-1"/>
    <property type="nucleotide sequence ID" value="NM_002625.4"/>
</dbReference>
<dbReference type="PDB" id="1K6M">
    <property type="method" value="X-ray"/>
    <property type="resolution" value="2.40 A"/>
    <property type="chains" value="A/B=40-471"/>
</dbReference>
<dbReference type="PDBsum" id="1K6M"/>
<dbReference type="BMRB" id="P16118"/>
<dbReference type="SMR" id="P16118"/>
<dbReference type="BioGRID" id="111228">
    <property type="interactions" value="27"/>
</dbReference>
<dbReference type="ComplexPortal" id="CPX-1992">
    <property type="entry name" value="6-phosphofructo-2-kinase/fructose-2,6-biphosphatase 1 complex"/>
</dbReference>
<dbReference type="FunCoup" id="P16118">
    <property type="interactions" value="857"/>
</dbReference>
<dbReference type="IntAct" id="P16118">
    <property type="interactions" value="17"/>
</dbReference>
<dbReference type="MINT" id="P16118"/>
<dbReference type="STRING" id="9606.ENSP00000364145"/>
<dbReference type="BindingDB" id="P16118"/>
<dbReference type="ChEMBL" id="CHEMBL3421524"/>
<dbReference type="DrugBank" id="DB02930">
    <property type="generic name" value="Adenosine 5'-[gamma-thio]triphosphate"/>
</dbReference>
<dbReference type="DrugBank" id="DB02393">
    <property type="generic name" value="D-Gluco-2,5-Anhydro-1-Deoxy-1-Phosphonohexitol-6-Phosphate"/>
</dbReference>
<dbReference type="DrugBank" id="DB04493">
    <property type="generic name" value="Fructose-6-phosphate"/>
</dbReference>
<dbReference type="DrugBank" id="DB04137">
    <property type="generic name" value="Guanosine-5'-Triphosphate"/>
</dbReference>
<dbReference type="DrugBank" id="DB13749">
    <property type="generic name" value="Magnesium gluconate"/>
</dbReference>
<dbReference type="DrugBank" id="DB02515">
    <property type="generic name" value="sn-glycerol 3-phosphate"/>
</dbReference>
<dbReference type="DEPOD" id="PFKFB1"/>
<dbReference type="GlyGen" id="P16118">
    <property type="glycosylation" value="3 sites, 1 O-linked glycan (2 sites)"/>
</dbReference>
<dbReference type="iPTMnet" id="P16118"/>
<dbReference type="PhosphoSitePlus" id="P16118"/>
<dbReference type="BioMuta" id="PFKFB1"/>
<dbReference type="DMDM" id="2507178"/>
<dbReference type="jPOST" id="P16118"/>
<dbReference type="MassIVE" id="P16118"/>
<dbReference type="PaxDb" id="9606-ENSP00000364145"/>
<dbReference type="PeptideAtlas" id="P16118"/>
<dbReference type="ProteomicsDB" id="5200"/>
<dbReference type="ProteomicsDB" id="53291">
    <molecule id="P16118-1"/>
</dbReference>
<dbReference type="Antibodypedia" id="533">
    <property type="antibodies" value="271 antibodies from 30 providers"/>
</dbReference>
<dbReference type="DNASU" id="5207"/>
<dbReference type="Ensembl" id="ENST00000375006.8">
    <molecule id="P16118-1"/>
    <property type="protein sequence ID" value="ENSP00000364145.3"/>
    <property type="gene ID" value="ENSG00000158571.11"/>
</dbReference>
<dbReference type="Ensembl" id="ENST00000545676.5">
    <molecule id="P16118-2"/>
    <property type="protein sequence ID" value="ENSP00000444074.1"/>
    <property type="gene ID" value="ENSG00000158571.11"/>
</dbReference>
<dbReference type="GeneID" id="5207"/>
<dbReference type="KEGG" id="hsa:5207"/>
<dbReference type="MANE-Select" id="ENST00000375006.8">
    <property type="protein sequence ID" value="ENSP00000364145.3"/>
    <property type="RefSeq nucleotide sequence ID" value="NM_002625.4"/>
    <property type="RefSeq protein sequence ID" value="NP_002616.2"/>
</dbReference>
<dbReference type="UCSC" id="uc004dty.3">
    <molecule id="P16118-1"/>
    <property type="organism name" value="human"/>
</dbReference>
<dbReference type="AGR" id="HGNC:8872"/>
<dbReference type="CTD" id="5207"/>
<dbReference type="DisGeNET" id="5207"/>
<dbReference type="GeneCards" id="PFKFB1"/>
<dbReference type="HGNC" id="HGNC:8872">
    <property type="gene designation" value="PFKFB1"/>
</dbReference>
<dbReference type="HPA" id="ENSG00000158571">
    <property type="expression patterns" value="Group enriched (adipose tissue, liver, skeletal muscle, tongue)"/>
</dbReference>
<dbReference type="MalaCards" id="PFKFB1"/>
<dbReference type="MIM" id="311790">
    <property type="type" value="gene"/>
</dbReference>
<dbReference type="neXtProt" id="NX_P16118"/>
<dbReference type="OpenTargets" id="ENSG00000158571"/>
<dbReference type="PharmGKB" id="PA33211"/>
<dbReference type="VEuPathDB" id="HostDB:ENSG00000158571"/>
<dbReference type="eggNOG" id="KOG0234">
    <property type="taxonomic scope" value="Eukaryota"/>
</dbReference>
<dbReference type="GeneTree" id="ENSGT00950000182835"/>
<dbReference type="HOGENOM" id="CLU_006383_1_1_1"/>
<dbReference type="InParanoid" id="P16118"/>
<dbReference type="OMA" id="RCMYAYF"/>
<dbReference type="OrthoDB" id="267323at2759"/>
<dbReference type="PAN-GO" id="P16118">
    <property type="GO annotations" value="5 GO annotations based on evolutionary models"/>
</dbReference>
<dbReference type="PhylomeDB" id="P16118"/>
<dbReference type="TreeFam" id="TF313541"/>
<dbReference type="BioCyc" id="MetaCyc:HS08310-MONOMER"/>
<dbReference type="BRENDA" id="2.7.1.105">
    <property type="organism ID" value="2681"/>
</dbReference>
<dbReference type="BRENDA" id="3.1.3.46">
    <property type="organism ID" value="2681"/>
</dbReference>
<dbReference type="PathwayCommons" id="P16118"/>
<dbReference type="Reactome" id="R-HSA-163358">
    <property type="pathway name" value="PKA-mediated phosphorylation of key metabolic factors"/>
</dbReference>
<dbReference type="Reactome" id="R-HSA-163767">
    <property type="pathway name" value="PP2A-mediated dephosphorylation of key metabolic factors"/>
</dbReference>
<dbReference type="Reactome" id="R-HSA-9634600">
    <property type="pathway name" value="Regulation of glycolysis by fructose 2,6-bisphosphate metabolism"/>
</dbReference>
<dbReference type="SABIO-RK" id="P16118"/>
<dbReference type="SignaLink" id="P16118"/>
<dbReference type="BioGRID-ORCS" id="5207">
    <property type="hits" value="9 hits in 784 CRISPR screens"/>
</dbReference>
<dbReference type="ChiTaRS" id="PFKFB1">
    <property type="organism name" value="human"/>
</dbReference>
<dbReference type="EvolutionaryTrace" id="P16118"/>
<dbReference type="GenomeRNAi" id="5207"/>
<dbReference type="Pharos" id="P16118">
    <property type="development level" value="Tbio"/>
</dbReference>
<dbReference type="PRO" id="PR:P16118"/>
<dbReference type="Proteomes" id="UP000005640">
    <property type="component" value="Chromosome X"/>
</dbReference>
<dbReference type="RNAct" id="P16118">
    <property type="molecule type" value="protein"/>
</dbReference>
<dbReference type="Bgee" id="ENSG00000158571">
    <property type="expression patterns" value="Expressed in hindlimb stylopod muscle and 107 other cell types or tissues"/>
</dbReference>
<dbReference type="ExpressionAtlas" id="P16118">
    <property type="expression patterns" value="baseline and differential"/>
</dbReference>
<dbReference type="GO" id="GO:0043540">
    <property type="term" value="C:6-phosphofructo-2-kinase/fructose-2,6-biphosphatase complex"/>
    <property type="evidence" value="ECO:0000314"/>
    <property type="project" value="UniProtKB"/>
</dbReference>
<dbReference type="GO" id="GO:0005829">
    <property type="term" value="C:cytosol"/>
    <property type="evidence" value="ECO:0000318"/>
    <property type="project" value="GO_Central"/>
</dbReference>
<dbReference type="GO" id="GO:0003873">
    <property type="term" value="F:6-phosphofructo-2-kinase activity"/>
    <property type="evidence" value="ECO:0000318"/>
    <property type="project" value="GO_Central"/>
</dbReference>
<dbReference type="GO" id="GO:0005524">
    <property type="term" value="F:ATP binding"/>
    <property type="evidence" value="ECO:0007669"/>
    <property type="project" value="UniProtKB-KW"/>
</dbReference>
<dbReference type="GO" id="GO:0004331">
    <property type="term" value="F:fructose-2,6-bisphosphate 2-phosphatase activity"/>
    <property type="evidence" value="ECO:0000314"/>
    <property type="project" value="UniProtKB"/>
</dbReference>
<dbReference type="GO" id="GO:0042802">
    <property type="term" value="F:identical protein binding"/>
    <property type="evidence" value="ECO:0000353"/>
    <property type="project" value="IntAct"/>
</dbReference>
<dbReference type="GO" id="GO:0006003">
    <property type="term" value="P:fructose 2,6-bisphosphate metabolic process"/>
    <property type="evidence" value="ECO:0000314"/>
    <property type="project" value="UniProtKB"/>
</dbReference>
<dbReference type="GO" id="GO:0006000">
    <property type="term" value="P:fructose metabolic process"/>
    <property type="evidence" value="ECO:0007669"/>
    <property type="project" value="InterPro"/>
</dbReference>
<dbReference type="GO" id="GO:0006094">
    <property type="term" value="P:gluconeogenesis"/>
    <property type="evidence" value="ECO:0000304"/>
    <property type="project" value="UniProtKB"/>
</dbReference>
<dbReference type="GO" id="GO:0006096">
    <property type="term" value="P:glycolytic process"/>
    <property type="evidence" value="ECO:0000304"/>
    <property type="project" value="UniProtKB"/>
</dbReference>
<dbReference type="GO" id="GO:1904539">
    <property type="term" value="P:negative regulation of glycolytic process through fructose-6-phosphate"/>
    <property type="evidence" value="ECO:0007669"/>
    <property type="project" value="Ensembl"/>
</dbReference>
<dbReference type="CDD" id="cd07067">
    <property type="entry name" value="HP_PGM_like"/>
    <property type="match status" value="1"/>
</dbReference>
<dbReference type="FunFam" id="3.40.50.1240:FF:000001">
    <property type="entry name" value="6-phosphofructo-2-kinase/fructose-2, 6-bisphosphatase 3 isoform 2"/>
    <property type="match status" value="1"/>
</dbReference>
<dbReference type="FunFam" id="3.40.50.300:FF:000047">
    <property type="entry name" value="6-phosphofructo-2-kinase/fructose-2, 6-bisphosphatase 3 isoform 2"/>
    <property type="match status" value="1"/>
</dbReference>
<dbReference type="Gene3D" id="3.40.50.300">
    <property type="entry name" value="P-loop containing nucleotide triphosphate hydrolases"/>
    <property type="match status" value="1"/>
</dbReference>
<dbReference type="Gene3D" id="3.40.50.1240">
    <property type="entry name" value="Phosphoglycerate mutase-like"/>
    <property type="match status" value="1"/>
</dbReference>
<dbReference type="InterPro" id="IPR003094">
    <property type="entry name" value="6Pfruct_kin"/>
</dbReference>
<dbReference type="InterPro" id="IPR013079">
    <property type="entry name" value="6Phosfructo_kin"/>
</dbReference>
<dbReference type="InterPro" id="IPR013078">
    <property type="entry name" value="His_Pase_superF_clade-1"/>
</dbReference>
<dbReference type="InterPro" id="IPR029033">
    <property type="entry name" value="His_PPase_superfam"/>
</dbReference>
<dbReference type="InterPro" id="IPR027417">
    <property type="entry name" value="P-loop_NTPase"/>
</dbReference>
<dbReference type="InterPro" id="IPR001345">
    <property type="entry name" value="PG/BPGM_mutase_AS"/>
</dbReference>
<dbReference type="PANTHER" id="PTHR10606">
    <property type="entry name" value="6-PHOSPHOFRUCTO-2-KINASE/FRUCTOSE-2,6-BISPHOSPHATASE"/>
    <property type="match status" value="1"/>
</dbReference>
<dbReference type="PANTHER" id="PTHR10606:SF15">
    <property type="entry name" value="6-PHOSPHOFRUCTO-2-KINASE_FRUCTOSE-2,6-BISPHOSPHATASE 1"/>
    <property type="match status" value="1"/>
</dbReference>
<dbReference type="Pfam" id="PF01591">
    <property type="entry name" value="6PF2K"/>
    <property type="match status" value="1"/>
</dbReference>
<dbReference type="Pfam" id="PF00300">
    <property type="entry name" value="His_Phos_1"/>
    <property type="match status" value="1"/>
</dbReference>
<dbReference type="PIRSF" id="PIRSF000709">
    <property type="entry name" value="6PFK_2-Ptase"/>
    <property type="match status" value="1"/>
</dbReference>
<dbReference type="PRINTS" id="PR00991">
    <property type="entry name" value="6PFRUCTKNASE"/>
</dbReference>
<dbReference type="SMART" id="SM00855">
    <property type="entry name" value="PGAM"/>
    <property type="match status" value="1"/>
</dbReference>
<dbReference type="SUPFAM" id="SSF52540">
    <property type="entry name" value="P-loop containing nucleoside triphosphate hydrolases"/>
    <property type="match status" value="1"/>
</dbReference>
<dbReference type="SUPFAM" id="SSF53254">
    <property type="entry name" value="Phosphoglycerate mutase-like"/>
    <property type="match status" value="1"/>
</dbReference>
<dbReference type="PROSITE" id="PS00175">
    <property type="entry name" value="PG_MUTASE"/>
    <property type="match status" value="1"/>
</dbReference>
<organism>
    <name type="scientific">Homo sapiens</name>
    <name type="common">Human</name>
    <dbReference type="NCBI Taxonomy" id="9606"/>
    <lineage>
        <taxon>Eukaryota</taxon>
        <taxon>Metazoa</taxon>
        <taxon>Chordata</taxon>
        <taxon>Craniata</taxon>
        <taxon>Vertebrata</taxon>
        <taxon>Euteleostomi</taxon>
        <taxon>Mammalia</taxon>
        <taxon>Eutheria</taxon>
        <taxon>Euarchontoglires</taxon>
        <taxon>Primates</taxon>
        <taxon>Haplorrhini</taxon>
        <taxon>Catarrhini</taxon>
        <taxon>Hominidae</taxon>
        <taxon>Homo</taxon>
    </lineage>
</organism>
<protein>
    <recommendedName>
        <fullName evidence="8">6-phosphofructo-2-kinase/fructose-2,6-bisphosphatase 1</fullName>
        <shortName>6PF-2-K/Fru-2,6-P2ase 1</shortName>
        <shortName>PFK/FBPase 1</shortName>
    </recommendedName>
    <alternativeName>
        <fullName>6PF-2-K/Fru-2,6-P2ase liver isozyme</fullName>
    </alternativeName>
    <domain>
        <recommendedName>
            <fullName>6-phosphofructo-2-kinase</fullName>
            <ecNumber evidence="2">2.7.1.105</ecNumber>
        </recommendedName>
    </domain>
    <domain>
        <recommendedName>
            <fullName>Fructose-2,6-bisphosphatase</fullName>
            <ecNumber evidence="6">3.1.3.46</ecNumber>
        </recommendedName>
    </domain>
</protein>
<comment type="function">
    <text evidence="6">Synthesis and degradation of fructose 2,6-bisphosphate.</text>
</comment>
<comment type="catalytic activity">
    <reaction evidence="6">
        <text>beta-D-fructose 2,6-bisphosphate + H2O = beta-D-fructose 6-phosphate + phosphate</text>
        <dbReference type="Rhea" id="RHEA:17289"/>
        <dbReference type="ChEBI" id="CHEBI:15377"/>
        <dbReference type="ChEBI" id="CHEBI:43474"/>
        <dbReference type="ChEBI" id="CHEBI:57634"/>
        <dbReference type="ChEBI" id="CHEBI:58579"/>
        <dbReference type="EC" id="3.1.3.46"/>
    </reaction>
    <physiologicalReaction direction="left-to-right" evidence="2">
        <dbReference type="Rhea" id="RHEA:17290"/>
    </physiologicalReaction>
</comment>
<comment type="catalytic activity">
    <reaction evidence="2">
        <text>beta-D-fructose 6-phosphate + ATP = beta-D-fructose 2,6-bisphosphate + ADP + H(+)</text>
        <dbReference type="Rhea" id="RHEA:15653"/>
        <dbReference type="ChEBI" id="CHEBI:15378"/>
        <dbReference type="ChEBI" id="CHEBI:30616"/>
        <dbReference type="ChEBI" id="CHEBI:57634"/>
        <dbReference type="ChEBI" id="CHEBI:58579"/>
        <dbReference type="ChEBI" id="CHEBI:456216"/>
        <dbReference type="EC" id="2.7.1.105"/>
    </reaction>
    <physiologicalReaction direction="left-to-right" evidence="2">
        <dbReference type="Rhea" id="RHEA:15654"/>
    </physiologicalReaction>
</comment>
<comment type="activity regulation">
    <text evidence="2">Phosphorylation at Ser-33 inhibits the kinase and activates the bisphosphatase.</text>
</comment>
<comment type="subunit">
    <text evidence="5">Homodimer.</text>
</comment>
<comment type="interaction">
    <interactant intactId="EBI-709807">
        <id>P16118</id>
    </interactant>
    <interactant intactId="EBI-742054">
        <id>Q96D03</id>
        <label>DDIT4L</label>
    </interactant>
    <organismsDiffer>false</organismsDiffer>
    <experiments>3</experiments>
</comment>
<comment type="interaction">
    <interactant intactId="EBI-709807">
        <id>P16118</id>
    </interactant>
    <interactant intactId="EBI-709928">
        <id>P35557</id>
        <label>GCK</label>
    </interactant>
    <organismsDiffer>false</organismsDiffer>
    <experiments>2</experiments>
</comment>
<comment type="interaction">
    <interactant intactId="EBI-709807">
        <id>P16118</id>
    </interactant>
    <interactant intactId="EBI-715394">
        <id>Q9H079</id>
        <label>KATNBL1</label>
    </interactant>
    <organismsDiffer>false</organismsDiffer>
    <experiments>5</experiments>
</comment>
<comment type="interaction">
    <interactant intactId="EBI-709807">
        <id>P16118</id>
    </interactant>
    <interactant intactId="EBI-12080840">
        <id>P27815-4</id>
        <label>PDE4A</label>
    </interactant>
    <organismsDiffer>false</organismsDiffer>
    <experiments>3</experiments>
</comment>
<comment type="interaction">
    <interactant intactId="EBI-709807">
        <id>P16118</id>
    </interactant>
    <interactant intactId="EBI-709807">
        <id>P16118</id>
        <label>PFKFB1</label>
    </interactant>
    <organismsDiffer>false</organismsDiffer>
    <experiments>7</experiments>
</comment>
<comment type="interaction">
    <interactant intactId="EBI-709807">
        <id>P16118</id>
    </interactant>
    <interactant intactId="EBI-764464">
        <id>Q16875</id>
        <label>PFKFB3</label>
    </interactant>
    <organismsDiffer>false</organismsDiffer>
    <experiments>3</experiments>
</comment>
<comment type="interaction">
    <interactant intactId="EBI-709807">
        <id>P16118</id>
    </interactant>
    <interactant intactId="EBI-764534">
        <id>Q16877</id>
        <label>PFKFB4</label>
    </interactant>
    <organismsDiffer>false</organismsDiffer>
    <experiments>6</experiments>
</comment>
<comment type="interaction">
    <interactant intactId="EBI-709807">
        <id>P16118</id>
    </interactant>
    <interactant intactId="EBI-949255">
        <id>Q58EX7</id>
        <label>PLEKHG4</label>
    </interactant>
    <organismsDiffer>false</organismsDiffer>
    <experiments>3</experiments>
</comment>
<comment type="interaction">
    <interactant intactId="EBI-709807">
        <id>P16118</id>
    </interactant>
    <interactant intactId="EBI-11957238">
        <id>Q2TAL6</id>
        <label>VWC2</label>
    </interactant>
    <organismsDiffer>false</organismsDiffer>
    <experiments>3</experiments>
</comment>
<comment type="interaction">
    <interactant intactId="EBI-709807">
        <id>P16118</id>
    </interactant>
    <interactant intactId="EBI-750821">
        <id>Q8N554</id>
        <label>ZNF276</label>
    </interactant>
    <organismsDiffer>false</organismsDiffer>
    <experiments>3</experiments>
</comment>
<comment type="interaction">
    <interactant intactId="EBI-709807">
        <id>P16118</id>
    </interactant>
    <interactant intactId="EBI-17269964">
        <id>Q6S9Z5</id>
        <label>ZNF474</label>
    </interactant>
    <organismsDiffer>false</organismsDiffer>
    <experiments>3</experiments>
</comment>
<comment type="interaction">
    <interactant intactId="EBI-709807">
        <id>P16118</id>
    </interactant>
    <interactant intactId="EBI-625509">
        <id>Q8N720</id>
        <label>ZNF655</label>
    </interactant>
    <organismsDiffer>false</organismsDiffer>
    <experiments>3</experiments>
</comment>
<comment type="interaction">
    <interactant intactId="EBI-709807">
        <id>P16118</id>
    </interactant>
    <interactant intactId="EBI-4395732">
        <id>P0C7X2</id>
        <label>ZNF688</label>
    </interactant>
    <organismsDiffer>false</organismsDiffer>
    <experiments>3</experiments>
</comment>
<comment type="alternative products">
    <event type="alternative splicing"/>
    <isoform>
        <id>P16118-1</id>
        <name>1</name>
        <sequence type="displayed"/>
    </isoform>
    <isoform>
        <id>P16118-2</id>
        <name>2</name>
        <sequence type="described" ref="VSP_054795"/>
    </isoform>
</comment>
<comment type="tissue specificity">
    <text>Liver.</text>
</comment>
<comment type="similarity">
    <text evidence="8">In the C-terminal section; belongs to the phosphoglycerate mutase family.</text>
</comment>
<evidence type="ECO:0000250" key="1">
    <source>
        <dbReference type="UniProtKB" id="P00950"/>
    </source>
</evidence>
<evidence type="ECO:0000250" key="2">
    <source>
        <dbReference type="UniProtKB" id="P07953"/>
    </source>
</evidence>
<evidence type="ECO:0000250" key="3">
    <source>
        <dbReference type="UniProtKB" id="Q16875"/>
    </source>
</evidence>
<evidence type="ECO:0000255" key="4"/>
<evidence type="ECO:0000269" key="5">
    <source>
    </source>
</evidence>
<evidence type="ECO:0000269" key="6">
    <source>
    </source>
</evidence>
<evidence type="ECO:0000303" key="7">
    <source>
    </source>
</evidence>
<evidence type="ECO:0000305" key="8"/>
<evidence type="ECO:0000312" key="9">
    <source>
        <dbReference type="HGNC" id="HGNC:8872"/>
    </source>
</evidence>
<evidence type="ECO:0007829" key="10">
    <source>
        <dbReference type="PDB" id="1K6M"/>
    </source>
</evidence>
<proteinExistence type="evidence at protein level"/>
<keyword id="KW-0002">3D-structure</keyword>
<keyword id="KW-0007">Acetylation</keyword>
<keyword id="KW-0025">Alternative splicing</keyword>
<keyword id="KW-0067">ATP-binding</keyword>
<keyword id="KW-0378">Hydrolase</keyword>
<keyword id="KW-0418">Kinase</keyword>
<keyword id="KW-0511">Multifunctional enzyme</keyword>
<keyword id="KW-0547">Nucleotide-binding</keyword>
<keyword id="KW-0597">Phosphoprotein</keyword>
<keyword id="KW-1267">Proteomics identification</keyword>
<keyword id="KW-1185">Reference proteome</keyword>
<keyword id="KW-0808">Transferase</keyword>
<sequence>MSPEMGELTQTRLQKIWIPHSSGSSRLQRRRGSSIPQFTNSPTMVIMVGLPARGKTYISTKLTRYLNWIGTPTKVFNLGQYRREAVSYKNYEFFLPDNMEALQIRKQCALAALKDVHNYLSHEEGHVAVFDATNTTRERRSLILQFAKEHGYKVFFIESICNDPGIIAENIRQVKLGSPDYIDCDREKVLEDFLKRIECYEVNYQPLDEELDSHLSYIKIFDVGTRYMVNRVQDHIQSRTVYYLMNIHVTPRSIYLCRHGESELNIRGRIGGDSGLSVRGKQYAYALANFIQSQGISSLKVWTSHMKRTIQTAEALGVPYEQWKALNEIDAGVCEEMTYEEIQEHYPEEFALRDQDKYRYRYPKGESYEDLVQRLEPVIMELERQENVLVICHQAVMRCLLAYFLDKSSDELPYLKCPLHTVLKLTPVAYGCKVESIYLNVEAVNTHREKPENVDITREPEEALDTVPAHY</sequence>